<keyword id="KW-0002">3D-structure</keyword>
<keyword id="KW-0929">Antimicrobial</keyword>
<keyword id="KW-0108">Calcium channel impairing toxin</keyword>
<keyword id="KW-0903">Direct protein sequencing</keyword>
<keyword id="KW-1015">Disulfide bond</keyword>
<keyword id="KW-0295">Fungicide</keyword>
<keyword id="KW-0872">Ion channel impairing toxin</keyword>
<keyword id="KW-0964">Secreted</keyword>
<keyword id="KW-0732">Signal</keyword>
<keyword id="KW-0800">Toxin</keyword>
<keyword id="KW-1218">Voltage-gated calcium channel impairing toxin</keyword>
<reference key="1">
    <citation type="journal article" date="2003" name="Peptides">
        <title>Insect diapause-specific peptide from the leaf beetle has consensus with a putative iridovirus peptide.</title>
        <authorList>
            <person name="Tanaka H."/>
            <person name="Sato K."/>
            <person name="Saito Y."/>
            <person name="Yamashita T."/>
            <person name="Agoh M."/>
            <person name="Okunishi J."/>
            <person name="Tachikawa E."/>
            <person name="Suzuki K."/>
        </authorList>
    </citation>
    <scope>NUCLEOTIDE SEQUENCE [MRNA]</scope>
    <scope>PROTEIN SEQUENCE OF 25-65</scope>
    <scope>FUNCTION</scope>
    <scope>DEVELOPMENTAL STAGE</scope>
    <scope>DISULFIDE BOND</scope>
</reference>
<reference key="2">
    <citation type="journal article" date="1998" name="Appl. Entomol. Zool. (Jpn.)">
        <title>Relationship between the introduced and indigenous parasitoids Torymus sinensis and T. beneficus (Hymenoptera: Torymidae), as inferred from mt-DNA (COI) sequences.</title>
        <authorList>
            <person name="Tanaka H."/>
            <person name="Sudo C."/>
            <person name="An Y."/>
            <person name="Yamashita T."/>
            <person name="Sato K."/>
            <person name="Kurihara M."/>
            <person name="Suzuki K."/>
        </authorList>
    </citation>
    <scope>PROTEIN SEQUENCE OF 25-60</scope>
    <scope>SUBCELLULAR LOCATION</scope>
    <scope>TISSUE SPECIFICITY</scope>
    <scope>MASS SPECTROMETRY</scope>
</reference>
<reference key="3">
    <citation type="journal article" date="2005" name="J. Insect Physiol.">
        <title>Expression profiling of a diapause-specific peptide (DSP) of the leaf beetle Gastrophysa atrocyanea and silencing of DSP by double-strand RNA.</title>
        <authorList>
            <person name="Tanaka H."/>
            <person name="Suzuki K."/>
        </authorList>
    </citation>
    <scope>DEVELOPMENTAL STAGE</scope>
</reference>
<reference key="4">
    <citation type="journal article" date="2007" name="Biochemistry">
        <title>The structure of a novel insect peptide explains its Ca(2+) channel blocking and antifungal activities.</title>
        <authorList>
            <person name="Kouno T."/>
            <person name="Mizuguchi M."/>
            <person name="Tanaka H."/>
            <person name="Yang P."/>
            <person name="Mori Y."/>
            <person name="Shinoda H."/>
            <person name="Unoki K."/>
            <person name="Aizawa T."/>
            <person name="Demura M."/>
            <person name="Suzuki K."/>
            <person name="Kawano K."/>
        </authorList>
    </citation>
    <scope>STRUCTURE BY NMR OF 25-65</scope>
    <scope>DISULFIDE BONDS</scope>
</reference>
<proteinExistence type="evidence at protein level"/>
<organism>
    <name type="scientific">Gastrophysa atrocyanea</name>
    <name type="common">Leaf beetle</name>
    <dbReference type="NCBI Taxonomy" id="169758"/>
    <lineage>
        <taxon>Eukaryota</taxon>
        <taxon>Metazoa</taxon>
        <taxon>Ecdysozoa</taxon>
        <taxon>Arthropoda</taxon>
        <taxon>Hexapoda</taxon>
        <taxon>Insecta</taxon>
        <taxon>Pterygota</taxon>
        <taxon>Neoptera</taxon>
        <taxon>Endopterygota</taxon>
        <taxon>Coleoptera</taxon>
        <taxon>Polyphaga</taxon>
        <taxon>Cucujiformia</taxon>
        <taxon>Chrysomeloidea</taxon>
        <taxon>Chrysomelidae</taxon>
        <taxon>Chrysomelinae</taxon>
        <taxon>Chrysomelini</taxon>
        <taxon>Gastrophysa</taxon>
    </lineage>
</organism>
<evidence type="ECO:0000269" key="1">
    <source>
    </source>
</evidence>
<evidence type="ECO:0000269" key="2">
    <source>
    </source>
</evidence>
<evidence type="ECO:0000269" key="3">
    <source>
    </source>
</evidence>
<evidence type="ECO:0000269" key="4">
    <source ref="2"/>
</evidence>
<evidence type="ECO:0000305" key="5"/>
<evidence type="ECO:0007829" key="6">
    <source>
        <dbReference type="PDB" id="2E2F"/>
    </source>
</evidence>
<feature type="signal peptide" evidence="1 4">
    <location>
        <begin position="1"/>
        <end position="24"/>
    </location>
</feature>
<feature type="chain" id="PRO_0000007217" description="Diapause-specific peptide">
    <location>
        <begin position="25"/>
        <end position="65"/>
    </location>
</feature>
<feature type="disulfide bond" evidence="3">
    <location>
        <begin position="31"/>
        <end position="45"/>
    </location>
</feature>
<feature type="disulfide bond" evidence="3">
    <location>
        <begin position="35"/>
        <end position="57"/>
    </location>
</feature>
<feature type="disulfide bond" evidence="3">
    <location>
        <begin position="46"/>
        <end position="64"/>
    </location>
</feature>
<feature type="helix" evidence="6">
    <location>
        <begin position="31"/>
        <end position="34"/>
    </location>
</feature>
<feature type="strand" evidence="6">
    <location>
        <begin position="35"/>
        <end position="37"/>
    </location>
</feature>
<feature type="helix" evidence="6">
    <location>
        <begin position="40"/>
        <end position="48"/>
    </location>
</feature>
<feature type="strand" evidence="6">
    <location>
        <begin position="54"/>
        <end position="58"/>
    </location>
</feature>
<feature type="strand" evidence="6">
    <location>
        <begin position="61"/>
        <end position="64"/>
    </location>
</feature>
<protein>
    <recommendedName>
        <fullName>Diapause-specific peptide</fullName>
        <shortName>DSP</shortName>
    </recommendedName>
    <alternativeName>
        <fullName>Diapausin</fullName>
    </alternativeName>
</protein>
<accession>Q8T0W8</accession>
<sequence>MGAALKMTIFLLIVACAMIATTEAAVRIGPCDQVCPRIVPERHECCRAHGRSGYAYCSGGGMYCN</sequence>
<dbReference type="EMBL" id="AB070558">
    <property type="protein sequence ID" value="BAB88222.1"/>
    <property type="molecule type" value="mRNA"/>
</dbReference>
<dbReference type="PDB" id="2CDX">
    <property type="method" value="NMR"/>
    <property type="chains" value="A=25-65"/>
</dbReference>
<dbReference type="PDB" id="2E2F">
    <property type="method" value="NMR"/>
    <property type="chains" value="A=25-65"/>
</dbReference>
<dbReference type="PDBsum" id="2CDX"/>
<dbReference type="PDBsum" id="2E2F"/>
<dbReference type="BMRB" id="Q8T0W8"/>
<dbReference type="SMR" id="Q8T0W8"/>
<dbReference type="EvolutionaryTrace" id="Q8T0W8"/>
<dbReference type="GO" id="GO:0005576">
    <property type="term" value="C:extracellular region"/>
    <property type="evidence" value="ECO:0000304"/>
    <property type="project" value="UniProtKB"/>
</dbReference>
<dbReference type="GO" id="GO:0019855">
    <property type="term" value="F:calcium channel inhibitor activity"/>
    <property type="evidence" value="ECO:0000314"/>
    <property type="project" value="UniProtKB"/>
</dbReference>
<dbReference type="GO" id="GO:0090729">
    <property type="term" value="F:toxin activity"/>
    <property type="evidence" value="ECO:0007669"/>
    <property type="project" value="UniProtKB-KW"/>
</dbReference>
<dbReference type="GO" id="GO:0019732">
    <property type="term" value="P:antifungal humoral response"/>
    <property type="evidence" value="ECO:0000314"/>
    <property type="project" value="UniProtKB"/>
</dbReference>
<dbReference type="GO" id="GO:0031640">
    <property type="term" value="P:killing of cells of another organism"/>
    <property type="evidence" value="ECO:0007669"/>
    <property type="project" value="UniProtKB-KW"/>
</dbReference>
<dbReference type="Gene3D" id="3.30.30.120">
    <property type="entry name" value="Diapause-specific peptide"/>
    <property type="match status" value="1"/>
</dbReference>
<dbReference type="InterPro" id="IPR038203">
    <property type="entry name" value="Diapausin_sf"/>
</dbReference>
<dbReference type="Pfam" id="PF08036">
    <property type="entry name" value="Antimicrobial_6"/>
    <property type="match status" value="1"/>
</dbReference>
<comment type="function">
    <text evidence="1">Has antifungal activity against T.rubrum. Blocks voltage-dependent N-type calcium channels (Cav2.2 / CACNA1B).</text>
</comment>
<comment type="subcellular location">
    <subcellularLocation>
        <location evidence="4">Secreted</location>
    </subcellularLocation>
</comment>
<comment type="tissue specificity">
    <text evidence="4">Highly expressed in the fat body.</text>
</comment>
<comment type="developmental stage">
    <text evidence="1 2">Produced throughout adult diapause, and to a minor extent in pupae, but not in eggs, larvae, or post-diapausing adults. Inhibition of DSP expression does not affect the onset or maintenance of diapause, indicating that the expression of DSP accompanies but does not play a direct role in the induction or maintenance of diapause.</text>
</comment>
<comment type="mass spectrometry"/>
<comment type="similarity">
    <text evidence="5">Belongs to the diapausin family.</text>
</comment>
<name>DIAP_GASAT</name>